<reference key="1">
    <citation type="submission" date="2007-06" db="EMBL/GenBank/DDBJ databases">
        <title>Complete sequence of Sinorhizobium medicae WSM419 plasmid pSMED01.</title>
        <authorList>
            <consortium name="US DOE Joint Genome Institute"/>
            <person name="Copeland A."/>
            <person name="Lucas S."/>
            <person name="Lapidus A."/>
            <person name="Barry K."/>
            <person name="Glavina del Rio T."/>
            <person name="Dalin E."/>
            <person name="Tice H."/>
            <person name="Pitluck S."/>
            <person name="Chain P."/>
            <person name="Malfatti S."/>
            <person name="Shin M."/>
            <person name="Vergez L."/>
            <person name="Schmutz J."/>
            <person name="Larimer F."/>
            <person name="Land M."/>
            <person name="Hauser L."/>
            <person name="Kyrpides N."/>
            <person name="Mikhailova N."/>
            <person name="Reeve W.G."/>
            <person name="Richardson P."/>
        </authorList>
    </citation>
    <scope>NUCLEOTIDE SEQUENCE [LARGE SCALE GENOMIC DNA]</scope>
    <source>
        <strain>WSM419</strain>
    </source>
</reference>
<gene>
    <name type="ordered locus">Smed_4051</name>
</gene>
<sequence>MLKWALIFFVISLIAGFLGFSGISAATAGIAKILFYIAVIIFLVFLVLALAVGGAVT</sequence>
<accession>A6UGS9</accession>
<feature type="chain" id="PRO_0000314232" description="UPF0391 membrane protein Smed_4051">
    <location>
        <begin position="1"/>
        <end position="57"/>
    </location>
</feature>
<feature type="transmembrane region" description="Helical" evidence="1">
    <location>
        <begin position="4"/>
        <end position="24"/>
    </location>
</feature>
<feature type="transmembrane region" description="Helical" evidence="1">
    <location>
        <begin position="33"/>
        <end position="53"/>
    </location>
</feature>
<comment type="subcellular location">
    <subcellularLocation>
        <location evidence="1">Cell membrane</location>
        <topology evidence="1">Multi-pass membrane protein</topology>
    </subcellularLocation>
</comment>
<comment type="similarity">
    <text evidence="1">Belongs to the UPF0391 family.</text>
</comment>
<evidence type="ECO:0000255" key="1">
    <source>
        <dbReference type="HAMAP-Rule" id="MF_01361"/>
    </source>
</evidence>
<protein>
    <recommendedName>
        <fullName evidence="1">UPF0391 membrane protein Smed_4051</fullName>
    </recommendedName>
</protein>
<name>Y4051_SINMW</name>
<organism>
    <name type="scientific">Sinorhizobium medicae (strain WSM419)</name>
    <name type="common">Ensifer medicae</name>
    <dbReference type="NCBI Taxonomy" id="366394"/>
    <lineage>
        <taxon>Bacteria</taxon>
        <taxon>Pseudomonadati</taxon>
        <taxon>Pseudomonadota</taxon>
        <taxon>Alphaproteobacteria</taxon>
        <taxon>Hyphomicrobiales</taxon>
        <taxon>Rhizobiaceae</taxon>
        <taxon>Sinorhizobium/Ensifer group</taxon>
        <taxon>Sinorhizobium</taxon>
    </lineage>
</organism>
<keyword id="KW-1003">Cell membrane</keyword>
<keyword id="KW-0472">Membrane</keyword>
<keyword id="KW-0614">Plasmid</keyword>
<keyword id="KW-0812">Transmembrane</keyword>
<keyword id="KW-1133">Transmembrane helix</keyword>
<dbReference type="EMBL" id="CP000739">
    <property type="protein sequence ID" value="ABR62859.1"/>
    <property type="molecule type" value="Genomic_DNA"/>
</dbReference>
<dbReference type="RefSeq" id="WP_011969681.1">
    <property type="nucleotide sequence ID" value="NC_009620.1"/>
</dbReference>
<dbReference type="RefSeq" id="YP_001312792.1">
    <property type="nucleotide sequence ID" value="NC_009620.1"/>
</dbReference>
<dbReference type="KEGG" id="smd:Smed_4051"/>
<dbReference type="PATRIC" id="fig|366394.8.peg.500"/>
<dbReference type="HOGENOM" id="CLU_187346_1_1_5"/>
<dbReference type="OrthoDB" id="8021162at2"/>
<dbReference type="Proteomes" id="UP000001108">
    <property type="component" value="Plasmid pSMED01"/>
</dbReference>
<dbReference type="GO" id="GO:0005886">
    <property type="term" value="C:plasma membrane"/>
    <property type="evidence" value="ECO:0007669"/>
    <property type="project" value="UniProtKB-SubCell"/>
</dbReference>
<dbReference type="HAMAP" id="MF_01361">
    <property type="entry name" value="UPF0391"/>
    <property type="match status" value="1"/>
</dbReference>
<dbReference type="InterPro" id="IPR009760">
    <property type="entry name" value="DUF1328"/>
</dbReference>
<dbReference type="NCBIfam" id="NF010226">
    <property type="entry name" value="PRK13682.1-1"/>
    <property type="match status" value="1"/>
</dbReference>
<dbReference type="NCBIfam" id="NF010234">
    <property type="entry name" value="PRK13682.2-5"/>
    <property type="match status" value="1"/>
</dbReference>
<dbReference type="Pfam" id="PF07043">
    <property type="entry name" value="DUF1328"/>
    <property type="match status" value="1"/>
</dbReference>
<dbReference type="PIRSF" id="PIRSF036466">
    <property type="entry name" value="UCP036466"/>
    <property type="match status" value="1"/>
</dbReference>
<proteinExistence type="inferred from homology"/>
<geneLocation type="plasmid">
    <name>pSMED01</name>
</geneLocation>